<accession>A1CMX6</accession>
<sequence>MGSSAKKKKEKKKDFQKTKLRVGKTKAKPENFTDTSFKAKSIVLNQQSLHISAPSADAQFTHHLSLTSSKSDTQRRDSLAHLTTSIVSRPVDSPLPQPVSAILPTLLPLILDASNGVRTQLLKLLRALPPADVQDHVAQLLPYIRAGMTHLAADLRVSAVEVLAWLVDVAGAEVVACAGGWIKTLNCFLSVLGWHTEESSKWSSSSSASVSASASATRASFGKAGAQGKPMIKMLGALAEFLQVGIGRPAEAAIGLDASDAEAGVAGWEFPLRHAAQHMVPRSSAPYIHLNLFGQPRDEEGEMYETREDRYRVFASRFLGAVQRGLEGARGEGGEVGRASAGVSKVLKEAIAYGPGP</sequence>
<gene>
    <name type="primary">ipi1</name>
    <name type="ORF">ACLA_098550</name>
</gene>
<reference key="1">
    <citation type="journal article" date="2008" name="PLoS Genet.">
        <title>Genomic islands in the pathogenic filamentous fungus Aspergillus fumigatus.</title>
        <authorList>
            <person name="Fedorova N.D."/>
            <person name="Khaldi N."/>
            <person name="Joardar V.S."/>
            <person name="Maiti R."/>
            <person name="Amedeo P."/>
            <person name="Anderson M.J."/>
            <person name="Crabtree J."/>
            <person name="Silva J.C."/>
            <person name="Badger J.H."/>
            <person name="Albarraq A."/>
            <person name="Angiuoli S."/>
            <person name="Bussey H."/>
            <person name="Bowyer P."/>
            <person name="Cotty P.J."/>
            <person name="Dyer P.S."/>
            <person name="Egan A."/>
            <person name="Galens K."/>
            <person name="Fraser-Liggett C.M."/>
            <person name="Haas B.J."/>
            <person name="Inman J.M."/>
            <person name="Kent R."/>
            <person name="Lemieux S."/>
            <person name="Malavazi I."/>
            <person name="Orvis J."/>
            <person name="Roemer T."/>
            <person name="Ronning C.M."/>
            <person name="Sundaram J.P."/>
            <person name="Sutton G."/>
            <person name="Turner G."/>
            <person name="Venter J.C."/>
            <person name="White O.R."/>
            <person name="Whitty B.R."/>
            <person name="Youngman P."/>
            <person name="Wolfe K.H."/>
            <person name="Goldman G.H."/>
            <person name="Wortman J.R."/>
            <person name="Jiang B."/>
            <person name="Denning D.W."/>
            <person name="Nierman W.C."/>
        </authorList>
    </citation>
    <scope>NUCLEOTIDE SEQUENCE [LARGE SCALE GENOMIC DNA]</scope>
    <source>
        <strain>ATCC 1007 / CBS 513.65 / DSM 816 / NCTC 3887 / NRRL 1 / QM 1276 / 107</strain>
    </source>
</reference>
<dbReference type="EMBL" id="DS027058">
    <property type="protein sequence ID" value="EAW08913.1"/>
    <property type="molecule type" value="Genomic_DNA"/>
</dbReference>
<dbReference type="RefSeq" id="XP_001270339.1">
    <property type="nucleotide sequence ID" value="XM_001270338.1"/>
</dbReference>
<dbReference type="SMR" id="A1CMX6"/>
<dbReference type="STRING" id="344612.A1CMX6"/>
<dbReference type="EnsemblFungi" id="EAW08913">
    <property type="protein sequence ID" value="EAW08913"/>
    <property type="gene ID" value="ACLA_098550"/>
</dbReference>
<dbReference type="GeneID" id="4702305"/>
<dbReference type="KEGG" id="act:ACLA_098550"/>
<dbReference type="VEuPathDB" id="FungiDB:ACLA_098550"/>
<dbReference type="eggNOG" id="KOG2149">
    <property type="taxonomic scope" value="Eukaryota"/>
</dbReference>
<dbReference type="HOGENOM" id="CLU_050252_2_0_1"/>
<dbReference type="OMA" id="CAGGWVK"/>
<dbReference type="OrthoDB" id="361362at2759"/>
<dbReference type="Proteomes" id="UP000006701">
    <property type="component" value="Unassembled WGS sequence"/>
</dbReference>
<dbReference type="GO" id="GO:0005634">
    <property type="term" value="C:nucleus"/>
    <property type="evidence" value="ECO:0007669"/>
    <property type="project" value="UniProtKB-SubCell"/>
</dbReference>
<dbReference type="GO" id="GO:0120330">
    <property type="term" value="C:rixosome complex"/>
    <property type="evidence" value="ECO:0007669"/>
    <property type="project" value="TreeGrafter"/>
</dbReference>
<dbReference type="GO" id="GO:0006364">
    <property type="term" value="P:rRNA processing"/>
    <property type="evidence" value="ECO:0007669"/>
    <property type="project" value="UniProtKB-KW"/>
</dbReference>
<dbReference type="Gene3D" id="1.25.10.10">
    <property type="entry name" value="Leucine-rich Repeat Variant"/>
    <property type="match status" value="1"/>
</dbReference>
<dbReference type="InterPro" id="IPR011989">
    <property type="entry name" value="ARM-like"/>
</dbReference>
<dbReference type="InterPro" id="IPR016024">
    <property type="entry name" value="ARM-type_fold"/>
</dbReference>
<dbReference type="InterPro" id="IPR024679">
    <property type="entry name" value="Ipi1_N"/>
</dbReference>
<dbReference type="PANTHER" id="PTHR16056">
    <property type="entry name" value="REGULATOR OF MICROTUBULE DYNAMICS PROTEIN"/>
    <property type="match status" value="1"/>
</dbReference>
<dbReference type="PANTHER" id="PTHR16056:SF2">
    <property type="entry name" value="TESTIS-EXPRESSED PROTEIN 10"/>
    <property type="match status" value="1"/>
</dbReference>
<dbReference type="Pfam" id="PF12333">
    <property type="entry name" value="Ipi1_N"/>
    <property type="match status" value="1"/>
</dbReference>
<dbReference type="SUPFAM" id="SSF48371">
    <property type="entry name" value="ARM repeat"/>
    <property type="match status" value="1"/>
</dbReference>
<protein>
    <recommendedName>
        <fullName>Pre-rRNA-processing protein ipi1</fullName>
    </recommendedName>
</protein>
<comment type="function">
    <text evidence="1">Component of the RIX1 complex required for processing of ITS2 sequences from 35S pre-rRNA.</text>
</comment>
<comment type="subunit">
    <text evidence="1">Component of the RIX1 complex, composed of ipi1, rix1/ipi2 and ipi3 in a 1:2:2 stoichiometry. The complex interacts (via rix1) with mdn1 (via its hexameric AAA ATPase ring) and the pre-60S ribosome particles.</text>
</comment>
<comment type="subcellular location">
    <subcellularLocation>
        <location evidence="1">Nucleus</location>
    </subcellularLocation>
</comment>
<comment type="similarity">
    <text evidence="3">Belongs to the IPI1/TEX10 family.</text>
</comment>
<evidence type="ECO:0000250" key="1">
    <source>
        <dbReference type="UniProtKB" id="P38803"/>
    </source>
</evidence>
<evidence type="ECO:0000256" key="2">
    <source>
        <dbReference type="SAM" id="MobiDB-lite"/>
    </source>
</evidence>
<evidence type="ECO:0000305" key="3"/>
<proteinExistence type="inferred from homology"/>
<name>IPI1_ASPCL</name>
<feature type="chain" id="PRO_0000308713" description="Pre-rRNA-processing protein ipi1">
    <location>
        <begin position="1"/>
        <end position="357"/>
    </location>
</feature>
<feature type="region of interest" description="Disordered" evidence="2">
    <location>
        <begin position="1"/>
        <end position="27"/>
    </location>
</feature>
<feature type="compositionally biased region" description="Basic residues" evidence="2">
    <location>
        <begin position="1"/>
        <end position="11"/>
    </location>
</feature>
<organism>
    <name type="scientific">Aspergillus clavatus (strain ATCC 1007 / CBS 513.65 / DSM 816 / NCTC 3887 / NRRL 1 / QM 1276 / 107)</name>
    <dbReference type="NCBI Taxonomy" id="344612"/>
    <lineage>
        <taxon>Eukaryota</taxon>
        <taxon>Fungi</taxon>
        <taxon>Dikarya</taxon>
        <taxon>Ascomycota</taxon>
        <taxon>Pezizomycotina</taxon>
        <taxon>Eurotiomycetes</taxon>
        <taxon>Eurotiomycetidae</taxon>
        <taxon>Eurotiales</taxon>
        <taxon>Aspergillaceae</taxon>
        <taxon>Aspergillus</taxon>
        <taxon>Aspergillus subgen. Fumigati</taxon>
    </lineage>
</organism>
<keyword id="KW-0539">Nucleus</keyword>
<keyword id="KW-1185">Reference proteome</keyword>
<keyword id="KW-0690">Ribosome biogenesis</keyword>
<keyword id="KW-0698">rRNA processing</keyword>